<gene>
    <name type="primary">Tlcd1</name>
</gene>
<evidence type="ECO:0000250" key="1">
    <source>
        <dbReference type="UniProtKB" id="F1NZP5"/>
    </source>
</evidence>
<evidence type="ECO:0000250" key="2">
    <source>
        <dbReference type="UniProtKB" id="Q96CP7"/>
    </source>
</evidence>
<evidence type="ECO:0000255" key="3"/>
<evidence type="ECO:0000255" key="4">
    <source>
        <dbReference type="PROSITE-ProRule" id="PRU00205"/>
    </source>
</evidence>
<protein>
    <recommendedName>
        <fullName>TLC domain-containing protein 1</fullName>
    </recommendedName>
    <alternativeName>
        <fullName>Calfacilitin</fullName>
    </alternativeName>
</protein>
<sequence length="247" mass="28729">MPLLLHPAWPLLLGATLTFRALRRVLCRLPLPAHVQTDPLRTWRWHNLLVSFTHSIVSGIWALLCIWQTPEMLVEIETAWSVCGYLLVCFSAGYFIHDTVDIVVSRQTRASWEYLVHHVMAMGAFFSGIFWKRFVGGGVLTLLVEVSNIFLTLRMMMKINNAQDILLYKVNKYVNLVMYFLFRLAPQAYLTKFFLQYAGQRTLGTFLLSILLMLDVMILIYFSRLLRSDFCPERAPSRQQKDKFLTE</sequence>
<keyword id="KW-1003">Cell membrane</keyword>
<keyword id="KW-0472">Membrane</keyword>
<keyword id="KW-1185">Reference proteome</keyword>
<keyword id="KW-0732">Signal</keyword>
<keyword id="KW-0812">Transmembrane</keyword>
<keyword id="KW-1133">Transmembrane helix</keyword>
<organism>
    <name type="scientific">Rattus norvegicus</name>
    <name type="common">Rat</name>
    <dbReference type="NCBI Taxonomy" id="10116"/>
    <lineage>
        <taxon>Eukaryota</taxon>
        <taxon>Metazoa</taxon>
        <taxon>Chordata</taxon>
        <taxon>Craniata</taxon>
        <taxon>Vertebrata</taxon>
        <taxon>Euteleostomi</taxon>
        <taxon>Mammalia</taxon>
        <taxon>Eutheria</taxon>
        <taxon>Euarchontoglires</taxon>
        <taxon>Glires</taxon>
        <taxon>Rodentia</taxon>
        <taxon>Myomorpha</taxon>
        <taxon>Muroidea</taxon>
        <taxon>Muridae</taxon>
        <taxon>Murinae</taxon>
        <taxon>Rattus</taxon>
    </lineage>
</organism>
<dbReference type="EMBL" id="BC085876">
    <property type="protein sequence ID" value="AAH85876.1"/>
    <property type="molecule type" value="mRNA"/>
</dbReference>
<dbReference type="RefSeq" id="NP_001013880.1">
    <property type="nucleotide sequence ID" value="NM_001013858.1"/>
</dbReference>
<dbReference type="SMR" id="Q5U2T1"/>
<dbReference type="FunCoup" id="Q5U2T1">
    <property type="interactions" value="112"/>
</dbReference>
<dbReference type="STRING" id="10116.ENSRNOP00000016840"/>
<dbReference type="PhosphoSitePlus" id="Q5U2T1"/>
<dbReference type="PaxDb" id="10116-ENSRNOP00000016840"/>
<dbReference type="Ensembl" id="ENSRNOT00000098225.1">
    <property type="protein sequence ID" value="ENSRNOP00000084592.1"/>
    <property type="gene ID" value="ENSRNOG00000071015.1"/>
</dbReference>
<dbReference type="GeneID" id="287472"/>
<dbReference type="KEGG" id="rno:287472"/>
<dbReference type="AGR" id="RGD:1359195"/>
<dbReference type="CTD" id="116238"/>
<dbReference type="RGD" id="1359195">
    <property type="gene designation" value="Tlcd1"/>
</dbReference>
<dbReference type="eggNOG" id="KOG4474">
    <property type="taxonomic scope" value="Eukaryota"/>
</dbReference>
<dbReference type="GeneTree" id="ENSGT01010000222313"/>
<dbReference type="HOGENOM" id="CLU_056440_2_1_1"/>
<dbReference type="InParanoid" id="Q5U2T1"/>
<dbReference type="OMA" id="CAGQNGM"/>
<dbReference type="OrthoDB" id="10266980at2759"/>
<dbReference type="PhylomeDB" id="Q5U2T1"/>
<dbReference type="TreeFam" id="TF315115"/>
<dbReference type="PRO" id="PR:Q5U2T1"/>
<dbReference type="Proteomes" id="UP000002494">
    <property type="component" value="Chromosome 10"/>
</dbReference>
<dbReference type="Bgee" id="ENSRNOG00000012579">
    <property type="expression patterns" value="Expressed in pancreas and 20 other cell types or tissues"/>
</dbReference>
<dbReference type="GO" id="GO:0005886">
    <property type="term" value="C:plasma membrane"/>
    <property type="evidence" value="ECO:0000266"/>
    <property type="project" value="RGD"/>
</dbReference>
<dbReference type="GO" id="GO:0071709">
    <property type="term" value="P:membrane assembly"/>
    <property type="evidence" value="ECO:0000266"/>
    <property type="project" value="RGD"/>
</dbReference>
<dbReference type="GO" id="GO:0055091">
    <property type="term" value="P:phospholipid homeostasis"/>
    <property type="evidence" value="ECO:0000266"/>
    <property type="project" value="RGD"/>
</dbReference>
<dbReference type="GO" id="GO:0007009">
    <property type="term" value="P:plasma membrane organization"/>
    <property type="evidence" value="ECO:0000266"/>
    <property type="project" value="RGD"/>
</dbReference>
<dbReference type="GO" id="GO:0097035">
    <property type="term" value="P:regulation of membrane lipid distribution"/>
    <property type="evidence" value="ECO:0000266"/>
    <property type="project" value="RGD"/>
</dbReference>
<dbReference type="InterPro" id="IPR006634">
    <property type="entry name" value="TLC-dom"/>
</dbReference>
<dbReference type="InterPro" id="IPR050846">
    <property type="entry name" value="TLCD"/>
</dbReference>
<dbReference type="PANTHER" id="PTHR13439">
    <property type="entry name" value="CT120 PROTEIN"/>
    <property type="match status" value="1"/>
</dbReference>
<dbReference type="PANTHER" id="PTHR13439:SF5">
    <property type="entry name" value="TLC DOMAIN-CONTAINING PROTEIN 1"/>
    <property type="match status" value="1"/>
</dbReference>
<dbReference type="Pfam" id="PF03798">
    <property type="entry name" value="TRAM_LAG1_CLN8"/>
    <property type="match status" value="1"/>
</dbReference>
<dbReference type="SMART" id="SM00724">
    <property type="entry name" value="TLC"/>
    <property type="match status" value="1"/>
</dbReference>
<dbReference type="PROSITE" id="PS50922">
    <property type="entry name" value="TLC"/>
    <property type="match status" value="1"/>
</dbReference>
<name>TLCD1_RAT</name>
<comment type="function">
    <text evidence="2">Regulates the composition and fluidity of the plasma membrane (By similarity). Inhibits the incorporation of membrane-fluidizing phospholipids containing omega-3 long-chain polyunsaturated fatty acids (LCPUFA) and thereby promotes membrane rigidity (By similarity). Does not appear to have any effect on LCPUFA synthesis (By similarity).</text>
</comment>
<comment type="subcellular location">
    <subcellularLocation>
        <location evidence="2">Cell membrane</location>
        <topology evidence="1">Multi-pass membrane protein</topology>
    </subcellularLocation>
</comment>
<comment type="caution">
    <text evidence="1 2">Was originally proposed to be a calcium channel facilitator (By similarity). However, a more recent study shows that this protein regulates membrane phospholipid homeostasis (By similarity). Therefore, any effects on calcium flux are most likely a secondary consequence of defects in membrane composition or fluidity (By similarity).</text>
</comment>
<feature type="signal peptide" evidence="3">
    <location>
        <begin position="1"/>
        <end position="27"/>
    </location>
</feature>
<feature type="chain" id="PRO_0000285679" description="TLC domain-containing protein 1">
    <location>
        <begin position="28"/>
        <end position="247"/>
    </location>
</feature>
<feature type="topological domain" description="Extracellular" evidence="1">
    <location>
        <begin position="28"/>
        <end position="46"/>
    </location>
</feature>
<feature type="transmembrane region" description="Helical" evidence="3">
    <location>
        <begin position="47"/>
        <end position="67"/>
    </location>
</feature>
<feature type="topological domain" description="Cytoplasmic" evidence="1">
    <location>
        <begin position="68"/>
        <end position="83"/>
    </location>
</feature>
<feature type="transmembrane region" description="Helical" evidence="3">
    <location>
        <begin position="84"/>
        <end position="104"/>
    </location>
</feature>
<feature type="topological domain" description="Extracellular" evidence="1">
    <location>
        <begin position="105"/>
        <end position="123"/>
    </location>
</feature>
<feature type="intramembrane region" description="Helical" evidence="3">
    <location>
        <begin position="124"/>
        <end position="144"/>
    </location>
</feature>
<feature type="topological domain" description="Extracellular" evidence="1">
    <location>
        <begin position="145"/>
        <end position="173"/>
    </location>
</feature>
<feature type="transmembrane region" description="Helical" evidence="3">
    <location>
        <begin position="174"/>
        <end position="194"/>
    </location>
</feature>
<feature type="topological domain" description="Cytoplasmic" evidence="1">
    <location>
        <begin position="195"/>
        <end position="201"/>
    </location>
</feature>
<feature type="transmembrane region" description="Helical" evidence="3">
    <location>
        <begin position="202"/>
        <end position="222"/>
    </location>
</feature>
<feature type="topological domain" description="Extracellular" evidence="1">
    <location>
        <begin position="223"/>
        <end position="247"/>
    </location>
</feature>
<feature type="domain" description="TLC" evidence="4">
    <location>
        <begin position="40"/>
        <end position="234"/>
    </location>
</feature>
<accession>Q5U2T1</accession>
<reference key="1">
    <citation type="journal article" date="2004" name="Genome Res.">
        <title>The status, quality, and expansion of the NIH full-length cDNA project: the Mammalian Gene Collection (MGC).</title>
        <authorList>
            <consortium name="The MGC Project Team"/>
        </authorList>
    </citation>
    <scope>NUCLEOTIDE SEQUENCE [LARGE SCALE MRNA]</scope>
    <source>
        <tissue>Heart</tissue>
    </source>
</reference>
<proteinExistence type="evidence at transcript level"/>